<accession>A5W5D7</accession>
<gene>
    <name evidence="1" type="primary">pheS</name>
    <name type="ordered locus">Pput_3221</name>
</gene>
<dbReference type="EC" id="6.1.1.20" evidence="1"/>
<dbReference type="EMBL" id="CP000712">
    <property type="protein sequence ID" value="ABQ79347.1"/>
    <property type="molecule type" value="Genomic_DNA"/>
</dbReference>
<dbReference type="SMR" id="A5W5D7"/>
<dbReference type="KEGG" id="ppf:Pput_3221"/>
<dbReference type="eggNOG" id="COG0016">
    <property type="taxonomic scope" value="Bacteria"/>
</dbReference>
<dbReference type="HOGENOM" id="CLU_025086_0_1_6"/>
<dbReference type="GO" id="GO:0005737">
    <property type="term" value="C:cytoplasm"/>
    <property type="evidence" value="ECO:0007669"/>
    <property type="project" value="UniProtKB-SubCell"/>
</dbReference>
<dbReference type="GO" id="GO:0005524">
    <property type="term" value="F:ATP binding"/>
    <property type="evidence" value="ECO:0007669"/>
    <property type="project" value="UniProtKB-UniRule"/>
</dbReference>
<dbReference type="GO" id="GO:0000287">
    <property type="term" value="F:magnesium ion binding"/>
    <property type="evidence" value="ECO:0007669"/>
    <property type="project" value="UniProtKB-UniRule"/>
</dbReference>
<dbReference type="GO" id="GO:0004826">
    <property type="term" value="F:phenylalanine-tRNA ligase activity"/>
    <property type="evidence" value="ECO:0007669"/>
    <property type="project" value="UniProtKB-UniRule"/>
</dbReference>
<dbReference type="GO" id="GO:0000049">
    <property type="term" value="F:tRNA binding"/>
    <property type="evidence" value="ECO:0007669"/>
    <property type="project" value="InterPro"/>
</dbReference>
<dbReference type="GO" id="GO:0006432">
    <property type="term" value="P:phenylalanyl-tRNA aminoacylation"/>
    <property type="evidence" value="ECO:0007669"/>
    <property type="project" value="UniProtKB-UniRule"/>
</dbReference>
<dbReference type="CDD" id="cd00496">
    <property type="entry name" value="PheRS_alpha_core"/>
    <property type="match status" value="1"/>
</dbReference>
<dbReference type="FunFam" id="3.30.930.10:FF:000003">
    <property type="entry name" value="Phenylalanine--tRNA ligase alpha subunit"/>
    <property type="match status" value="1"/>
</dbReference>
<dbReference type="Gene3D" id="3.30.930.10">
    <property type="entry name" value="Bira Bifunctional Protein, Domain 2"/>
    <property type="match status" value="1"/>
</dbReference>
<dbReference type="HAMAP" id="MF_00281">
    <property type="entry name" value="Phe_tRNA_synth_alpha1"/>
    <property type="match status" value="1"/>
</dbReference>
<dbReference type="InterPro" id="IPR006195">
    <property type="entry name" value="aa-tRNA-synth_II"/>
</dbReference>
<dbReference type="InterPro" id="IPR045864">
    <property type="entry name" value="aa-tRNA-synth_II/BPL/LPL"/>
</dbReference>
<dbReference type="InterPro" id="IPR004529">
    <property type="entry name" value="Phe-tRNA-synth_IIc_asu"/>
</dbReference>
<dbReference type="InterPro" id="IPR004188">
    <property type="entry name" value="Phe-tRNA_ligase_II_N"/>
</dbReference>
<dbReference type="InterPro" id="IPR022911">
    <property type="entry name" value="Phe_tRNA_ligase_alpha1_bac"/>
</dbReference>
<dbReference type="InterPro" id="IPR002319">
    <property type="entry name" value="Phenylalanyl-tRNA_Synthase"/>
</dbReference>
<dbReference type="InterPro" id="IPR010978">
    <property type="entry name" value="tRNA-bd_arm"/>
</dbReference>
<dbReference type="NCBIfam" id="TIGR00468">
    <property type="entry name" value="pheS"/>
    <property type="match status" value="1"/>
</dbReference>
<dbReference type="PANTHER" id="PTHR11538:SF41">
    <property type="entry name" value="PHENYLALANINE--TRNA LIGASE, MITOCHONDRIAL"/>
    <property type="match status" value="1"/>
</dbReference>
<dbReference type="PANTHER" id="PTHR11538">
    <property type="entry name" value="PHENYLALANYL-TRNA SYNTHETASE"/>
    <property type="match status" value="1"/>
</dbReference>
<dbReference type="Pfam" id="PF02912">
    <property type="entry name" value="Phe_tRNA-synt_N"/>
    <property type="match status" value="1"/>
</dbReference>
<dbReference type="Pfam" id="PF01409">
    <property type="entry name" value="tRNA-synt_2d"/>
    <property type="match status" value="1"/>
</dbReference>
<dbReference type="SUPFAM" id="SSF55681">
    <property type="entry name" value="Class II aaRS and biotin synthetases"/>
    <property type="match status" value="1"/>
</dbReference>
<dbReference type="SUPFAM" id="SSF46589">
    <property type="entry name" value="tRNA-binding arm"/>
    <property type="match status" value="1"/>
</dbReference>
<dbReference type="PROSITE" id="PS50862">
    <property type="entry name" value="AA_TRNA_LIGASE_II"/>
    <property type="match status" value="1"/>
</dbReference>
<organism>
    <name type="scientific">Pseudomonas putida (strain ATCC 700007 / DSM 6899 / JCM 31910 / BCRC 17059 / LMG 24140 / F1)</name>
    <dbReference type="NCBI Taxonomy" id="351746"/>
    <lineage>
        <taxon>Bacteria</taxon>
        <taxon>Pseudomonadati</taxon>
        <taxon>Pseudomonadota</taxon>
        <taxon>Gammaproteobacteria</taxon>
        <taxon>Pseudomonadales</taxon>
        <taxon>Pseudomonadaceae</taxon>
        <taxon>Pseudomonas</taxon>
    </lineage>
</organism>
<comment type="catalytic activity">
    <reaction evidence="1">
        <text>tRNA(Phe) + L-phenylalanine + ATP = L-phenylalanyl-tRNA(Phe) + AMP + diphosphate + H(+)</text>
        <dbReference type="Rhea" id="RHEA:19413"/>
        <dbReference type="Rhea" id="RHEA-COMP:9668"/>
        <dbReference type="Rhea" id="RHEA-COMP:9699"/>
        <dbReference type="ChEBI" id="CHEBI:15378"/>
        <dbReference type="ChEBI" id="CHEBI:30616"/>
        <dbReference type="ChEBI" id="CHEBI:33019"/>
        <dbReference type="ChEBI" id="CHEBI:58095"/>
        <dbReference type="ChEBI" id="CHEBI:78442"/>
        <dbReference type="ChEBI" id="CHEBI:78531"/>
        <dbReference type="ChEBI" id="CHEBI:456215"/>
        <dbReference type="EC" id="6.1.1.20"/>
    </reaction>
</comment>
<comment type="cofactor">
    <cofactor evidence="1">
        <name>Mg(2+)</name>
        <dbReference type="ChEBI" id="CHEBI:18420"/>
    </cofactor>
    <text evidence="1">Binds 2 magnesium ions per tetramer.</text>
</comment>
<comment type="subunit">
    <text evidence="1">Tetramer of two alpha and two beta subunits.</text>
</comment>
<comment type="subcellular location">
    <subcellularLocation>
        <location evidence="1">Cytoplasm</location>
    </subcellularLocation>
</comment>
<comment type="similarity">
    <text evidence="1">Belongs to the class-II aminoacyl-tRNA synthetase family. Phe-tRNA synthetase alpha subunit type 1 subfamily.</text>
</comment>
<evidence type="ECO:0000255" key="1">
    <source>
        <dbReference type="HAMAP-Rule" id="MF_00281"/>
    </source>
</evidence>
<sequence length="338" mass="38083">MENLDALVSQALEAVERAEDINALEQIRVNYLGKKGELTQVMKTLGNLPAEERPKVGALINDAKERVTVVLNARKAAFEEAELSARLAAECIDVTLPGRGQATGGLHPITRTLERIEQFFTHIGYGIAEGPEVEDDYHNFEALNIPGHHPARAMHDTFYFNANMLLRTHTSPVQVRTMESTQPPIRIVCPGRVYRCDSDITHSPMFHQVEGLLIDRDINFADLKGTIEEFLRVFFEKELAVRFRPSFFPFTEPSAEVDIQCVMCSGNGCRVCKQTGWLEVMGCGMVHPNVLRMSGIDPEEFQGFAFGMGAERLAMLRYGVNDLRLFFDNDLRFLAQFR</sequence>
<protein>
    <recommendedName>
        <fullName evidence="1">Phenylalanine--tRNA ligase alpha subunit</fullName>
        <ecNumber evidence="1">6.1.1.20</ecNumber>
    </recommendedName>
    <alternativeName>
        <fullName evidence="1">Phenylalanyl-tRNA synthetase alpha subunit</fullName>
        <shortName evidence="1">PheRS</shortName>
    </alternativeName>
</protein>
<reference key="1">
    <citation type="submission" date="2007-05" db="EMBL/GenBank/DDBJ databases">
        <title>Complete sequence of Pseudomonas putida F1.</title>
        <authorList>
            <consortium name="US DOE Joint Genome Institute"/>
            <person name="Copeland A."/>
            <person name="Lucas S."/>
            <person name="Lapidus A."/>
            <person name="Barry K."/>
            <person name="Detter J.C."/>
            <person name="Glavina del Rio T."/>
            <person name="Hammon N."/>
            <person name="Israni S."/>
            <person name="Dalin E."/>
            <person name="Tice H."/>
            <person name="Pitluck S."/>
            <person name="Chain P."/>
            <person name="Malfatti S."/>
            <person name="Shin M."/>
            <person name="Vergez L."/>
            <person name="Schmutz J."/>
            <person name="Larimer F."/>
            <person name="Land M."/>
            <person name="Hauser L."/>
            <person name="Kyrpides N."/>
            <person name="Lykidis A."/>
            <person name="Parales R."/>
            <person name="Richardson P."/>
        </authorList>
    </citation>
    <scope>NUCLEOTIDE SEQUENCE [LARGE SCALE GENOMIC DNA]</scope>
    <source>
        <strain>ATCC 700007 / DSM 6899 / JCM 31910 / BCRC 17059 / LMG 24140 / F1</strain>
    </source>
</reference>
<feature type="chain" id="PRO_1000006877" description="Phenylalanine--tRNA ligase alpha subunit">
    <location>
        <begin position="1"/>
        <end position="338"/>
    </location>
</feature>
<feature type="binding site" evidence="1">
    <location>
        <position position="252"/>
    </location>
    <ligand>
        <name>Mg(2+)</name>
        <dbReference type="ChEBI" id="CHEBI:18420"/>
        <note>shared with beta subunit</note>
    </ligand>
</feature>
<keyword id="KW-0030">Aminoacyl-tRNA synthetase</keyword>
<keyword id="KW-0067">ATP-binding</keyword>
<keyword id="KW-0963">Cytoplasm</keyword>
<keyword id="KW-0436">Ligase</keyword>
<keyword id="KW-0460">Magnesium</keyword>
<keyword id="KW-0479">Metal-binding</keyword>
<keyword id="KW-0547">Nucleotide-binding</keyword>
<keyword id="KW-0648">Protein biosynthesis</keyword>
<name>SYFA_PSEP1</name>
<proteinExistence type="inferred from homology"/>